<evidence type="ECO:0000255" key="1">
    <source>
        <dbReference type="HAMAP-Rule" id="MF_01014"/>
    </source>
</evidence>
<accession>B8IPH4</accession>
<name>HIS4_METNO</name>
<reference key="1">
    <citation type="submission" date="2009-01" db="EMBL/GenBank/DDBJ databases">
        <title>Complete sequence of chromosome of Methylobacterium nodulans ORS 2060.</title>
        <authorList>
            <consortium name="US DOE Joint Genome Institute"/>
            <person name="Lucas S."/>
            <person name="Copeland A."/>
            <person name="Lapidus A."/>
            <person name="Glavina del Rio T."/>
            <person name="Dalin E."/>
            <person name="Tice H."/>
            <person name="Bruce D."/>
            <person name="Goodwin L."/>
            <person name="Pitluck S."/>
            <person name="Sims D."/>
            <person name="Brettin T."/>
            <person name="Detter J.C."/>
            <person name="Han C."/>
            <person name="Larimer F."/>
            <person name="Land M."/>
            <person name="Hauser L."/>
            <person name="Kyrpides N."/>
            <person name="Ivanova N."/>
            <person name="Marx C.J."/>
            <person name="Richardson P."/>
        </authorList>
    </citation>
    <scope>NUCLEOTIDE SEQUENCE [LARGE SCALE GENOMIC DNA]</scope>
    <source>
        <strain>LMG 21967 / CNCM I-2342 / ORS 2060</strain>
    </source>
</reference>
<dbReference type="EC" id="5.3.1.16" evidence="1"/>
<dbReference type="EMBL" id="CP001349">
    <property type="protein sequence ID" value="ACL62266.1"/>
    <property type="molecule type" value="Genomic_DNA"/>
</dbReference>
<dbReference type="RefSeq" id="WP_015933820.1">
    <property type="nucleotide sequence ID" value="NC_011894.1"/>
</dbReference>
<dbReference type="SMR" id="B8IPH4"/>
<dbReference type="STRING" id="460265.Mnod_7530"/>
<dbReference type="KEGG" id="mno:Mnod_7530"/>
<dbReference type="eggNOG" id="COG0106">
    <property type="taxonomic scope" value="Bacteria"/>
</dbReference>
<dbReference type="HOGENOM" id="CLU_048577_1_1_5"/>
<dbReference type="UniPathway" id="UPA00031">
    <property type="reaction ID" value="UER00009"/>
</dbReference>
<dbReference type="Proteomes" id="UP000008207">
    <property type="component" value="Chromosome"/>
</dbReference>
<dbReference type="GO" id="GO:0005737">
    <property type="term" value="C:cytoplasm"/>
    <property type="evidence" value="ECO:0007669"/>
    <property type="project" value="UniProtKB-SubCell"/>
</dbReference>
<dbReference type="GO" id="GO:0003949">
    <property type="term" value="F:1-(5-phosphoribosyl)-5-[(5-phosphoribosylamino)methylideneamino]imidazole-4-carboxamide isomerase activity"/>
    <property type="evidence" value="ECO:0007669"/>
    <property type="project" value="UniProtKB-UniRule"/>
</dbReference>
<dbReference type="GO" id="GO:0000105">
    <property type="term" value="P:L-histidine biosynthetic process"/>
    <property type="evidence" value="ECO:0007669"/>
    <property type="project" value="UniProtKB-UniRule"/>
</dbReference>
<dbReference type="GO" id="GO:0000162">
    <property type="term" value="P:L-tryptophan biosynthetic process"/>
    <property type="evidence" value="ECO:0007669"/>
    <property type="project" value="TreeGrafter"/>
</dbReference>
<dbReference type="CDD" id="cd04732">
    <property type="entry name" value="HisA"/>
    <property type="match status" value="1"/>
</dbReference>
<dbReference type="FunFam" id="3.20.20.70:FF:000009">
    <property type="entry name" value="1-(5-phosphoribosyl)-5-[(5-phosphoribosylamino)methylideneamino] imidazole-4-carboxamide isomerase"/>
    <property type="match status" value="1"/>
</dbReference>
<dbReference type="Gene3D" id="3.20.20.70">
    <property type="entry name" value="Aldolase class I"/>
    <property type="match status" value="1"/>
</dbReference>
<dbReference type="HAMAP" id="MF_01014">
    <property type="entry name" value="HisA"/>
    <property type="match status" value="1"/>
</dbReference>
<dbReference type="InterPro" id="IPR013785">
    <property type="entry name" value="Aldolase_TIM"/>
</dbReference>
<dbReference type="InterPro" id="IPR006062">
    <property type="entry name" value="His_biosynth"/>
</dbReference>
<dbReference type="InterPro" id="IPR006063">
    <property type="entry name" value="HisA_bact_arch"/>
</dbReference>
<dbReference type="InterPro" id="IPR044524">
    <property type="entry name" value="Isoase_HisA-like"/>
</dbReference>
<dbReference type="InterPro" id="IPR023016">
    <property type="entry name" value="Isoase_HisA-like_bact"/>
</dbReference>
<dbReference type="InterPro" id="IPR011060">
    <property type="entry name" value="RibuloseP-bd_barrel"/>
</dbReference>
<dbReference type="NCBIfam" id="TIGR00007">
    <property type="entry name" value="1-(5-phosphoribosyl)-5-[(5-phosphoribosylamino)methylideneamino]imidazole-4-carboxamide isomerase"/>
    <property type="match status" value="1"/>
</dbReference>
<dbReference type="PANTHER" id="PTHR43090">
    <property type="entry name" value="1-(5-PHOSPHORIBOSYL)-5-[(5-PHOSPHORIBOSYLAMINO)METHYLIDENEAMINO] IMIDAZOLE-4-CARBOXAMIDE ISOMERASE"/>
    <property type="match status" value="1"/>
</dbReference>
<dbReference type="PANTHER" id="PTHR43090:SF2">
    <property type="entry name" value="1-(5-PHOSPHORIBOSYL)-5-[(5-PHOSPHORIBOSYLAMINO)METHYLIDENEAMINO] IMIDAZOLE-4-CARBOXAMIDE ISOMERASE"/>
    <property type="match status" value="1"/>
</dbReference>
<dbReference type="Pfam" id="PF00977">
    <property type="entry name" value="His_biosynth"/>
    <property type="match status" value="1"/>
</dbReference>
<dbReference type="SUPFAM" id="SSF51366">
    <property type="entry name" value="Ribulose-phoshate binding barrel"/>
    <property type="match status" value="1"/>
</dbReference>
<comment type="catalytic activity">
    <reaction evidence="1">
        <text>1-(5-phospho-beta-D-ribosyl)-5-[(5-phospho-beta-D-ribosylamino)methylideneamino]imidazole-4-carboxamide = 5-[(5-phospho-1-deoxy-D-ribulos-1-ylimino)methylamino]-1-(5-phospho-beta-D-ribosyl)imidazole-4-carboxamide</text>
        <dbReference type="Rhea" id="RHEA:15469"/>
        <dbReference type="ChEBI" id="CHEBI:58435"/>
        <dbReference type="ChEBI" id="CHEBI:58525"/>
        <dbReference type="EC" id="5.3.1.16"/>
    </reaction>
</comment>
<comment type="pathway">
    <text evidence="1">Amino-acid biosynthesis; L-histidine biosynthesis; L-histidine from 5-phospho-alpha-D-ribose 1-diphosphate: step 4/9.</text>
</comment>
<comment type="subcellular location">
    <subcellularLocation>
        <location evidence="1">Cytoplasm</location>
    </subcellularLocation>
</comment>
<comment type="similarity">
    <text evidence="1">Belongs to the HisA/HisF family.</text>
</comment>
<proteinExistence type="inferred from homology"/>
<protein>
    <recommendedName>
        <fullName evidence="1">1-(5-phosphoribosyl)-5-[(5-phosphoribosylamino)methylideneamino] imidazole-4-carboxamide isomerase</fullName>
        <ecNumber evidence="1">5.3.1.16</ecNumber>
    </recommendedName>
    <alternativeName>
        <fullName evidence="1">Phosphoribosylformimino-5-aminoimidazole carboxamide ribotide isomerase</fullName>
    </alternativeName>
</protein>
<keyword id="KW-0028">Amino-acid biosynthesis</keyword>
<keyword id="KW-0963">Cytoplasm</keyword>
<keyword id="KW-0368">Histidine biosynthesis</keyword>
<keyword id="KW-0413">Isomerase</keyword>
<keyword id="KW-1185">Reference proteome</keyword>
<gene>
    <name evidence="1" type="primary">hisA</name>
    <name type="ordered locus">Mnod_7530</name>
</gene>
<sequence length="253" mass="26524">MTRVILFPAIDLKEGRCVRLVQGDMAQAIVFSDDPAAQAASFAEQGFSWLHVVDLDGAFAGAPMNAAAVDAILAAVTIPVQLGGGIREMRTVEGWLAKGVSRVIIGTAAVRDPAFVREAARLFPGRIAVGIDAKDGRVAVEGWAKTSTVTAEELGRRFEDAGVAALIYTDIARDGVLKGLNIPMTLALAQAVSIPVIASGGLASIEDVHRILEPDCALLAGAITGRALYDGRIDPREALAAIRRAEEARRSGS</sequence>
<organism>
    <name type="scientific">Methylobacterium nodulans (strain LMG 21967 / CNCM I-2342 / ORS 2060)</name>
    <dbReference type="NCBI Taxonomy" id="460265"/>
    <lineage>
        <taxon>Bacteria</taxon>
        <taxon>Pseudomonadati</taxon>
        <taxon>Pseudomonadota</taxon>
        <taxon>Alphaproteobacteria</taxon>
        <taxon>Hyphomicrobiales</taxon>
        <taxon>Methylobacteriaceae</taxon>
        <taxon>Methylobacterium</taxon>
    </lineage>
</organism>
<feature type="chain" id="PRO_1000148976" description="1-(5-phosphoribosyl)-5-[(5-phosphoribosylamino)methylideneamino] imidazole-4-carboxamide isomerase">
    <location>
        <begin position="1"/>
        <end position="253"/>
    </location>
</feature>
<feature type="active site" description="Proton acceptor" evidence="1">
    <location>
        <position position="11"/>
    </location>
</feature>
<feature type="active site" description="Proton donor" evidence="1">
    <location>
        <position position="132"/>
    </location>
</feature>